<sequence>MTERKQGAAAPRPLNRPQGESPKATKLPATLLYADPLPDDLVEVGYVGAAYGIRGWIKVEPHANDASALLHARRWWLLTPPQAGLVATAEASRAQAVCVRVAQSREHSGTVVAQATGVSDRNLAEALKGRRVWIRRADFPAPEENEFYWVDLIGCAVSNEQGELLGEVSGLIDNGAHQILQVAYALPDGKAGERLVPFVDAFLRTVDTAGKRIVVDWGLDY</sequence>
<organism>
    <name type="scientific">Cupriavidus pinatubonensis (strain JMP 134 / LMG 1197)</name>
    <name type="common">Cupriavidus necator (strain JMP 134)</name>
    <dbReference type="NCBI Taxonomy" id="264198"/>
    <lineage>
        <taxon>Bacteria</taxon>
        <taxon>Pseudomonadati</taxon>
        <taxon>Pseudomonadota</taxon>
        <taxon>Betaproteobacteria</taxon>
        <taxon>Burkholderiales</taxon>
        <taxon>Burkholderiaceae</taxon>
        <taxon>Cupriavidus</taxon>
    </lineage>
</organism>
<reference key="1">
    <citation type="journal article" date="2010" name="PLoS ONE">
        <title>The complete multipartite genome sequence of Cupriavidus necator JMP134, a versatile pollutant degrader.</title>
        <authorList>
            <person name="Lykidis A."/>
            <person name="Perez-Pantoja D."/>
            <person name="Ledger T."/>
            <person name="Mavromatis K."/>
            <person name="Anderson I.J."/>
            <person name="Ivanova N.N."/>
            <person name="Hooper S.D."/>
            <person name="Lapidus A."/>
            <person name="Lucas S."/>
            <person name="Gonzalez B."/>
            <person name="Kyrpides N.C."/>
        </authorList>
    </citation>
    <scope>NUCLEOTIDE SEQUENCE [LARGE SCALE GENOMIC DNA]</scope>
    <source>
        <strain>JMP134 / LMG 1197</strain>
    </source>
</reference>
<accession>Q46Y83</accession>
<proteinExistence type="inferred from homology"/>
<evidence type="ECO:0000255" key="1">
    <source>
        <dbReference type="HAMAP-Rule" id="MF_00014"/>
    </source>
</evidence>
<evidence type="ECO:0000256" key="2">
    <source>
        <dbReference type="SAM" id="MobiDB-lite"/>
    </source>
</evidence>
<protein>
    <recommendedName>
        <fullName evidence="1">Ribosome maturation factor RimM</fullName>
    </recommendedName>
</protein>
<gene>
    <name evidence="1" type="primary">rimM</name>
    <name type="ordered locus">Reut_A2539</name>
</gene>
<dbReference type="EMBL" id="CP000090">
    <property type="protein sequence ID" value="AAZ61900.1"/>
    <property type="molecule type" value="Genomic_DNA"/>
</dbReference>
<dbReference type="SMR" id="Q46Y83"/>
<dbReference type="STRING" id="264198.Reut_A2539"/>
<dbReference type="KEGG" id="reu:Reut_A2539"/>
<dbReference type="eggNOG" id="COG0806">
    <property type="taxonomic scope" value="Bacteria"/>
</dbReference>
<dbReference type="HOGENOM" id="CLU_077636_1_0_4"/>
<dbReference type="GO" id="GO:0005737">
    <property type="term" value="C:cytoplasm"/>
    <property type="evidence" value="ECO:0007669"/>
    <property type="project" value="UniProtKB-SubCell"/>
</dbReference>
<dbReference type="GO" id="GO:0005840">
    <property type="term" value="C:ribosome"/>
    <property type="evidence" value="ECO:0007669"/>
    <property type="project" value="InterPro"/>
</dbReference>
<dbReference type="GO" id="GO:0043022">
    <property type="term" value="F:ribosome binding"/>
    <property type="evidence" value="ECO:0007669"/>
    <property type="project" value="InterPro"/>
</dbReference>
<dbReference type="GO" id="GO:0042274">
    <property type="term" value="P:ribosomal small subunit biogenesis"/>
    <property type="evidence" value="ECO:0007669"/>
    <property type="project" value="UniProtKB-UniRule"/>
</dbReference>
<dbReference type="GO" id="GO:0006364">
    <property type="term" value="P:rRNA processing"/>
    <property type="evidence" value="ECO:0007669"/>
    <property type="project" value="UniProtKB-UniRule"/>
</dbReference>
<dbReference type="Gene3D" id="2.30.30.240">
    <property type="entry name" value="PRC-barrel domain"/>
    <property type="match status" value="1"/>
</dbReference>
<dbReference type="Gene3D" id="2.40.30.60">
    <property type="entry name" value="RimM"/>
    <property type="match status" value="1"/>
</dbReference>
<dbReference type="HAMAP" id="MF_00014">
    <property type="entry name" value="Ribosome_mat_RimM"/>
    <property type="match status" value="1"/>
</dbReference>
<dbReference type="InterPro" id="IPR011033">
    <property type="entry name" value="PRC_barrel-like_sf"/>
</dbReference>
<dbReference type="InterPro" id="IPR056792">
    <property type="entry name" value="PRC_RimM"/>
</dbReference>
<dbReference type="InterPro" id="IPR011961">
    <property type="entry name" value="RimM"/>
</dbReference>
<dbReference type="InterPro" id="IPR002676">
    <property type="entry name" value="RimM_N"/>
</dbReference>
<dbReference type="InterPro" id="IPR036976">
    <property type="entry name" value="RimM_N_sf"/>
</dbReference>
<dbReference type="InterPro" id="IPR009000">
    <property type="entry name" value="Transl_B-barrel_sf"/>
</dbReference>
<dbReference type="NCBIfam" id="TIGR02273">
    <property type="entry name" value="16S_RimM"/>
    <property type="match status" value="1"/>
</dbReference>
<dbReference type="PANTHER" id="PTHR33692">
    <property type="entry name" value="RIBOSOME MATURATION FACTOR RIMM"/>
    <property type="match status" value="1"/>
</dbReference>
<dbReference type="PANTHER" id="PTHR33692:SF1">
    <property type="entry name" value="RIBOSOME MATURATION FACTOR RIMM"/>
    <property type="match status" value="1"/>
</dbReference>
<dbReference type="Pfam" id="PF24986">
    <property type="entry name" value="PRC_RimM"/>
    <property type="match status" value="1"/>
</dbReference>
<dbReference type="Pfam" id="PF01782">
    <property type="entry name" value="RimM"/>
    <property type="match status" value="1"/>
</dbReference>
<dbReference type="SUPFAM" id="SSF50346">
    <property type="entry name" value="PRC-barrel domain"/>
    <property type="match status" value="1"/>
</dbReference>
<dbReference type="SUPFAM" id="SSF50447">
    <property type="entry name" value="Translation proteins"/>
    <property type="match status" value="1"/>
</dbReference>
<comment type="function">
    <text evidence="1">An accessory protein needed during the final step in the assembly of 30S ribosomal subunit, possibly for assembly of the head region. Essential for efficient processing of 16S rRNA. May be needed both before and after RbfA during the maturation of 16S rRNA. It has affinity for free ribosomal 30S subunits but not for 70S ribosomes.</text>
</comment>
<comment type="subunit">
    <text evidence="1">Binds ribosomal protein uS19.</text>
</comment>
<comment type="subcellular location">
    <subcellularLocation>
        <location evidence="1">Cytoplasm</location>
    </subcellularLocation>
</comment>
<comment type="domain">
    <text evidence="1">The PRC barrel domain binds ribosomal protein uS19.</text>
</comment>
<comment type="similarity">
    <text evidence="1">Belongs to the RimM family.</text>
</comment>
<keyword id="KW-0143">Chaperone</keyword>
<keyword id="KW-0963">Cytoplasm</keyword>
<keyword id="KW-0690">Ribosome biogenesis</keyword>
<keyword id="KW-0698">rRNA processing</keyword>
<name>RIMM_CUPPJ</name>
<feature type="chain" id="PRO_0000244154" description="Ribosome maturation factor RimM">
    <location>
        <begin position="1"/>
        <end position="221"/>
    </location>
</feature>
<feature type="domain" description="PRC barrel" evidence="1">
    <location>
        <begin position="144"/>
        <end position="221"/>
    </location>
</feature>
<feature type="region of interest" description="Disordered" evidence="2">
    <location>
        <begin position="1"/>
        <end position="23"/>
    </location>
</feature>